<name>UP11_GINBI</name>
<proteinExistence type="evidence at protein level"/>
<feature type="chain" id="PRO_0000341524" description="Unknown protein 11">
    <location>
        <begin position="1" status="less than"/>
        <end position="8" status="greater than"/>
    </location>
</feature>
<feature type="non-terminal residue">
    <location>
        <position position="1"/>
    </location>
</feature>
<feature type="non-terminal residue">
    <location>
        <position position="8"/>
    </location>
</feature>
<sequence>ANDLVDDK</sequence>
<keyword id="KW-0903">Direct protein sequencing</keyword>
<accession>P85409</accession>
<protein>
    <recommendedName>
        <fullName>Unknown protein 11</fullName>
    </recommendedName>
</protein>
<reference key="1">
    <citation type="journal article" date="2009" name="Physiol. Plantarum">
        <title>The presence of sinapyl lignin in Ginkgo biloba cell cultures changes our views of the evolution of lignin biosynthesis.</title>
        <authorList>
            <person name="Novo Uzal E."/>
            <person name="Gomez Ros L.V."/>
            <person name="Pomar F."/>
            <person name="Bernal M.A."/>
            <person name="Paradela A."/>
            <person name="Albar J.P."/>
            <person name="Ros Barcelo A."/>
        </authorList>
    </citation>
    <scope>PROTEIN SEQUENCE</scope>
    <source>
        <strain>PC-650</strain>
        <tissue>Callus</tissue>
    </source>
</reference>
<organism>
    <name type="scientific">Ginkgo biloba</name>
    <name type="common">Ginkgo</name>
    <name type="synonym">Maidenhair tree</name>
    <dbReference type="NCBI Taxonomy" id="3311"/>
    <lineage>
        <taxon>Eukaryota</taxon>
        <taxon>Viridiplantae</taxon>
        <taxon>Streptophyta</taxon>
        <taxon>Embryophyta</taxon>
        <taxon>Tracheophyta</taxon>
        <taxon>Spermatophyta</taxon>
        <taxon>Ginkgoidae</taxon>
        <taxon>Ginkgoales</taxon>
        <taxon>Ginkgoaceae</taxon>
        <taxon>Ginkgo</taxon>
    </lineage>
</organism>